<name>GPMA_SOLM1</name>
<proteinExistence type="inferred from homology"/>
<sequence>MHTLVLVRHGQSVWNLENRFTGWTDVGLTPQGREEAAQAANLLRDGGYDFDACLTSVLSRAVMTLDILLTGLDRLWLPVTKSWRLNERHYGGLQGLNKAEMAAQYGEEQVFVWRRSYDTPPPALDPADERFPGRDRRYATLTDAELPRCESLKDTVARVMPFWHDVMAPAIASGTRLLVAAHGNSLRALVKYLDAIGDDAISECNIPTGVPLIYKLDASLKPLEHFYLGDAEAVARKAAAVAAQGKAKG</sequence>
<dbReference type="EC" id="5.4.2.11" evidence="1"/>
<dbReference type="EMBL" id="AP010904">
    <property type="protein sequence ID" value="BAH76623.1"/>
    <property type="molecule type" value="Genomic_DNA"/>
</dbReference>
<dbReference type="RefSeq" id="WP_015861777.1">
    <property type="nucleotide sequence ID" value="NC_012796.1"/>
</dbReference>
<dbReference type="SMR" id="C4XIQ5"/>
<dbReference type="STRING" id="573370.DMR_31320"/>
<dbReference type="KEGG" id="dma:DMR_31320"/>
<dbReference type="eggNOG" id="COG0588">
    <property type="taxonomic scope" value="Bacteria"/>
</dbReference>
<dbReference type="HOGENOM" id="CLU_033323_1_1_7"/>
<dbReference type="OrthoDB" id="9781415at2"/>
<dbReference type="UniPathway" id="UPA00109">
    <property type="reaction ID" value="UER00186"/>
</dbReference>
<dbReference type="Proteomes" id="UP000009071">
    <property type="component" value="Chromosome"/>
</dbReference>
<dbReference type="GO" id="GO:0004619">
    <property type="term" value="F:phosphoglycerate mutase activity"/>
    <property type="evidence" value="ECO:0007669"/>
    <property type="project" value="UniProtKB-EC"/>
</dbReference>
<dbReference type="GO" id="GO:0006094">
    <property type="term" value="P:gluconeogenesis"/>
    <property type="evidence" value="ECO:0007669"/>
    <property type="project" value="UniProtKB-UniRule"/>
</dbReference>
<dbReference type="GO" id="GO:0006096">
    <property type="term" value="P:glycolytic process"/>
    <property type="evidence" value="ECO:0007669"/>
    <property type="project" value="UniProtKB-UniRule"/>
</dbReference>
<dbReference type="CDD" id="cd07067">
    <property type="entry name" value="HP_PGM_like"/>
    <property type="match status" value="1"/>
</dbReference>
<dbReference type="FunFam" id="3.40.50.1240:FF:000003">
    <property type="entry name" value="2,3-bisphosphoglycerate-dependent phosphoglycerate mutase"/>
    <property type="match status" value="1"/>
</dbReference>
<dbReference type="Gene3D" id="3.40.50.1240">
    <property type="entry name" value="Phosphoglycerate mutase-like"/>
    <property type="match status" value="1"/>
</dbReference>
<dbReference type="HAMAP" id="MF_01039">
    <property type="entry name" value="PGAM_GpmA"/>
    <property type="match status" value="1"/>
</dbReference>
<dbReference type="InterPro" id="IPR013078">
    <property type="entry name" value="His_Pase_superF_clade-1"/>
</dbReference>
<dbReference type="InterPro" id="IPR029033">
    <property type="entry name" value="His_PPase_superfam"/>
</dbReference>
<dbReference type="InterPro" id="IPR001345">
    <property type="entry name" value="PG/BPGM_mutase_AS"/>
</dbReference>
<dbReference type="InterPro" id="IPR005952">
    <property type="entry name" value="Phosphogly_mut1"/>
</dbReference>
<dbReference type="NCBIfam" id="TIGR01258">
    <property type="entry name" value="pgm_1"/>
    <property type="match status" value="1"/>
</dbReference>
<dbReference type="NCBIfam" id="NF010713">
    <property type="entry name" value="PRK14115.1"/>
    <property type="match status" value="1"/>
</dbReference>
<dbReference type="PANTHER" id="PTHR11931">
    <property type="entry name" value="PHOSPHOGLYCERATE MUTASE"/>
    <property type="match status" value="1"/>
</dbReference>
<dbReference type="Pfam" id="PF00300">
    <property type="entry name" value="His_Phos_1"/>
    <property type="match status" value="1"/>
</dbReference>
<dbReference type="PIRSF" id="PIRSF000709">
    <property type="entry name" value="6PFK_2-Ptase"/>
    <property type="match status" value="1"/>
</dbReference>
<dbReference type="SMART" id="SM00855">
    <property type="entry name" value="PGAM"/>
    <property type="match status" value="1"/>
</dbReference>
<dbReference type="SUPFAM" id="SSF53254">
    <property type="entry name" value="Phosphoglycerate mutase-like"/>
    <property type="match status" value="1"/>
</dbReference>
<dbReference type="PROSITE" id="PS00175">
    <property type="entry name" value="PG_MUTASE"/>
    <property type="match status" value="1"/>
</dbReference>
<accession>C4XIQ5</accession>
<protein>
    <recommendedName>
        <fullName evidence="1">2,3-bisphosphoglycerate-dependent phosphoglycerate mutase</fullName>
        <shortName evidence="1">BPG-dependent PGAM</shortName>
        <shortName evidence="1">PGAM</shortName>
        <shortName evidence="1">Phosphoglyceromutase</shortName>
        <shortName evidence="1">dPGM</shortName>
        <ecNumber evidence="1">5.4.2.11</ecNumber>
    </recommendedName>
</protein>
<organism>
    <name type="scientific">Solidesulfovibrio magneticus (strain ATCC 700980 / DSM 13731 / RS-1)</name>
    <name type="common">Desulfovibrio magneticus</name>
    <dbReference type="NCBI Taxonomy" id="573370"/>
    <lineage>
        <taxon>Bacteria</taxon>
        <taxon>Pseudomonadati</taxon>
        <taxon>Thermodesulfobacteriota</taxon>
        <taxon>Desulfovibrionia</taxon>
        <taxon>Desulfovibrionales</taxon>
        <taxon>Desulfovibrionaceae</taxon>
        <taxon>Solidesulfovibrio</taxon>
    </lineage>
</organism>
<reference key="1">
    <citation type="journal article" date="2009" name="Genome Res.">
        <title>Whole genome sequence of Desulfovibrio magneticus strain RS-1 revealed common gene clusters in magnetotactic bacteria.</title>
        <authorList>
            <person name="Nakazawa H."/>
            <person name="Arakaki A."/>
            <person name="Narita-Yamada S."/>
            <person name="Yashiro I."/>
            <person name="Jinno K."/>
            <person name="Aoki N."/>
            <person name="Tsuruyama A."/>
            <person name="Okamura Y."/>
            <person name="Tanikawa S."/>
            <person name="Fujita N."/>
            <person name="Takeyama H."/>
            <person name="Matsunaga T."/>
        </authorList>
    </citation>
    <scope>NUCLEOTIDE SEQUENCE [LARGE SCALE GENOMIC DNA]</scope>
    <source>
        <strain>ATCC 700980 / DSM 13731 / RS-1</strain>
    </source>
</reference>
<gene>
    <name evidence="1" type="primary">gpmA</name>
    <name type="ordered locus">DMR_31320</name>
</gene>
<feature type="chain" id="PRO_1000213387" description="2,3-bisphosphoglycerate-dependent phosphoglycerate mutase">
    <location>
        <begin position="1"/>
        <end position="249"/>
    </location>
</feature>
<feature type="active site" description="Tele-phosphohistidine intermediate" evidence="1">
    <location>
        <position position="9"/>
    </location>
</feature>
<feature type="active site" description="Proton donor/acceptor" evidence="1">
    <location>
        <position position="87"/>
    </location>
</feature>
<feature type="binding site" evidence="1">
    <location>
        <begin position="8"/>
        <end position="15"/>
    </location>
    <ligand>
        <name>substrate</name>
    </ligand>
</feature>
<feature type="binding site" evidence="1">
    <location>
        <begin position="21"/>
        <end position="22"/>
    </location>
    <ligand>
        <name>substrate</name>
    </ligand>
</feature>
<feature type="binding site" evidence="1">
    <location>
        <position position="60"/>
    </location>
    <ligand>
        <name>substrate</name>
    </ligand>
</feature>
<feature type="binding site" evidence="1">
    <location>
        <begin position="87"/>
        <end position="90"/>
    </location>
    <ligand>
        <name>substrate</name>
    </ligand>
</feature>
<feature type="binding site" evidence="1">
    <location>
        <position position="98"/>
    </location>
    <ligand>
        <name>substrate</name>
    </ligand>
</feature>
<feature type="binding site" evidence="1">
    <location>
        <begin position="114"/>
        <end position="115"/>
    </location>
    <ligand>
        <name>substrate</name>
    </ligand>
</feature>
<feature type="binding site" evidence="1">
    <location>
        <begin position="183"/>
        <end position="184"/>
    </location>
    <ligand>
        <name>substrate</name>
    </ligand>
</feature>
<feature type="site" description="Transition state stabilizer" evidence="1">
    <location>
        <position position="182"/>
    </location>
</feature>
<keyword id="KW-0312">Gluconeogenesis</keyword>
<keyword id="KW-0324">Glycolysis</keyword>
<keyword id="KW-0413">Isomerase</keyword>
<comment type="function">
    <text evidence="1">Catalyzes the interconversion of 2-phosphoglycerate and 3-phosphoglycerate.</text>
</comment>
<comment type="catalytic activity">
    <reaction evidence="1">
        <text>(2R)-2-phosphoglycerate = (2R)-3-phosphoglycerate</text>
        <dbReference type="Rhea" id="RHEA:15901"/>
        <dbReference type="ChEBI" id="CHEBI:58272"/>
        <dbReference type="ChEBI" id="CHEBI:58289"/>
        <dbReference type="EC" id="5.4.2.11"/>
    </reaction>
</comment>
<comment type="pathway">
    <text evidence="1">Carbohydrate degradation; glycolysis; pyruvate from D-glyceraldehyde 3-phosphate: step 3/5.</text>
</comment>
<comment type="subunit">
    <text evidence="1">Homodimer.</text>
</comment>
<comment type="similarity">
    <text evidence="1">Belongs to the phosphoglycerate mutase family. BPG-dependent PGAM subfamily.</text>
</comment>
<evidence type="ECO:0000255" key="1">
    <source>
        <dbReference type="HAMAP-Rule" id="MF_01039"/>
    </source>
</evidence>